<sequence>MTKPPLTLYLAAPRGFCAGVDRAIKIVEMALEKWGAPVYVRHEIVHNKFVVDRLRDMGAVFVEELDEAPTDRPVIFSAHGVPKSVPAEAERRNMVYVDATCPLVSKVHLEAERHHENGLQMIMIGHAGHPETIGTMGQLPEGEVLLVETVEDVAGLEVRDPERLAYITQTTLSIDDTAAIVAALRERFPAINIPRKEDICYATTNRQGAVKALSDRIEALLVIGAPNSSNSRRLVEVGRAAGCRVAQLVQRATEIDWDSLQGVTAVGVAAGASAPEVLVDEVIAAFRERFDTTVELVETVKERVEFKVPRILREAAETP</sequence>
<reference key="1">
    <citation type="submission" date="2007-04" db="EMBL/GenBank/DDBJ databases">
        <title>Complete sequence of chromosome of Rhodobacter sphaeroides ATCC 17025.</title>
        <authorList>
            <consortium name="US DOE Joint Genome Institute"/>
            <person name="Copeland A."/>
            <person name="Lucas S."/>
            <person name="Lapidus A."/>
            <person name="Barry K."/>
            <person name="Detter J.C."/>
            <person name="Glavina del Rio T."/>
            <person name="Hammon N."/>
            <person name="Israni S."/>
            <person name="Dalin E."/>
            <person name="Tice H."/>
            <person name="Pitluck S."/>
            <person name="Chertkov O."/>
            <person name="Brettin T."/>
            <person name="Bruce D."/>
            <person name="Han C."/>
            <person name="Schmutz J."/>
            <person name="Larimer F."/>
            <person name="Land M."/>
            <person name="Hauser L."/>
            <person name="Kyrpides N."/>
            <person name="Kim E."/>
            <person name="Richardson P."/>
            <person name="Mackenzie C."/>
            <person name="Choudhary M."/>
            <person name="Donohue T.J."/>
            <person name="Kaplan S."/>
        </authorList>
    </citation>
    <scope>NUCLEOTIDE SEQUENCE [LARGE SCALE GENOMIC DNA]</scope>
    <source>
        <strain>ATCC 17025 / ATH 2.4.3</strain>
    </source>
</reference>
<name>ISPH_CERS5</name>
<gene>
    <name evidence="1" type="primary">ispH</name>
    <name type="ordered locus">Rsph17025_2580</name>
</gene>
<organism>
    <name type="scientific">Cereibacter sphaeroides (strain ATCC 17025 / ATH 2.4.3)</name>
    <name type="common">Rhodobacter sphaeroides</name>
    <dbReference type="NCBI Taxonomy" id="349102"/>
    <lineage>
        <taxon>Bacteria</taxon>
        <taxon>Pseudomonadati</taxon>
        <taxon>Pseudomonadota</taxon>
        <taxon>Alphaproteobacteria</taxon>
        <taxon>Rhodobacterales</taxon>
        <taxon>Paracoccaceae</taxon>
        <taxon>Cereibacter</taxon>
    </lineage>
</organism>
<accession>A4WVQ4</accession>
<feature type="chain" id="PRO_1000021172" description="4-hydroxy-3-methylbut-2-enyl diphosphate reductase">
    <location>
        <begin position="1"/>
        <end position="319"/>
    </location>
</feature>
<feature type="active site" description="Proton donor" evidence="1">
    <location>
        <position position="131"/>
    </location>
</feature>
<feature type="binding site" evidence="1">
    <location>
        <position position="17"/>
    </location>
    <ligand>
        <name>[4Fe-4S] cluster</name>
        <dbReference type="ChEBI" id="CHEBI:49883"/>
    </ligand>
</feature>
<feature type="binding site" evidence="1">
    <location>
        <position position="46"/>
    </location>
    <ligand>
        <name>(2E)-4-hydroxy-3-methylbut-2-enyl diphosphate</name>
        <dbReference type="ChEBI" id="CHEBI:128753"/>
    </ligand>
</feature>
<feature type="binding site" evidence="1">
    <location>
        <position position="46"/>
    </location>
    <ligand>
        <name>dimethylallyl diphosphate</name>
        <dbReference type="ChEBI" id="CHEBI:57623"/>
    </ligand>
</feature>
<feature type="binding site" evidence="1">
    <location>
        <position position="46"/>
    </location>
    <ligand>
        <name>isopentenyl diphosphate</name>
        <dbReference type="ChEBI" id="CHEBI:128769"/>
    </ligand>
</feature>
<feature type="binding site" evidence="1">
    <location>
        <position position="79"/>
    </location>
    <ligand>
        <name>(2E)-4-hydroxy-3-methylbut-2-enyl diphosphate</name>
        <dbReference type="ChEBI" id="CHEBI:128753"/>
    </ligand>
</feature>
<feature type="binding site" evidence="1">
    <location>
        <position position="79"/>
    </location>
    <ligand>
        <name>dimethylallyl diphosphate</name>
        <dbReference type="ChEBI" id="CHEBI:57623"/>
    </ligand>
</feature>
<feature type="binding site" evidence="1">
    <location>
        <position position="79"/>
    </location>
    <ligand>
        <name>isopentenyl diphosphate</name>
        <dbReference type="ChEBI" id="CHEBI:128769"/>
    </ligand>
</feature>
<feature type="binding site" evidence="1">
    <location>
        <position position="101"/>
    </location>
    <ligand>
        <name>[4Fe-4S] cluster</name>
        <dbReference type="ChEBI" id="CHEBI:49883"/>
    </ligand>
</feature>
<feature type="binding site" evidence="1">
    <location>
        <position position="129"/>
    </location>
    <ligand>
        <name>(2E)-4-hydroxy-3-methylbut-2-enyl diphosphate</name>
        <dbReference type="ChEBI" id="CHEBI:128753"/>
    </ligand>
</feature>
<feature type="binding site" evidence="1">
    <location>
        <position position="129"/>
    </location>
    <ligand>
        <name>dimethylallyl diphosphate</name>
        <dbReference type="ChEBI" id="CHEBI:57623"/>
    </ligand>
</feature>
<feature type="binding site" evidence="1">
    <location>
        <position position="129"/>
    </location>
    <ligand>
        <name>isopentenyl diphosphate</name>
        <dbReference type="ChEBI" id="CHEBI:128769"/>
    </ligand>
</feature>
<feature type="binding site" evidence="1">
    <location>
        <position position="170"/>
    </location>
    <ligand>
        <name>(2E)-4-hydroxy-3-methylbut-2-enyl diphosphate</name>
        <dbReference type="ChEBI" id="CHEBI:128753"/>
    </ligand>
</feature>
<feature type="binding site" evidence="1">
    <location>
        <position position="200"/>
    </location>
    <ligand>
        <name>[4Fe-4S] cluster</name>
        <dbReference type="ChEBI" id="CHEBI:49883"/>
    </ligand>
</feature>
<feature type="binding site" evidence="1">
    <location>
        <position position="228"/>
    </location>
    <ligand>
        <name>(2E)-4-hydroxy-3-methylbut-2-enyl diphosphate</name>
        <dbReference type="ChEBI" id="CHEBI:128753"/>
    </ligand>
</feature>
<feature type="binding site" evidence="1">
    <location>
        <position position="228"/>
    </location>
    <ligand>
        <name>dimethylallyl diphosphate</name>
        <dbReference type="ChEBI" id="CHEBI:57623"/>
    </ligand>
</feature>
<feature type="binding site" evidence="1">
    <location>
        <position position="228"/>
    </location>
    <ligand>
        <name>isopentenyl diphosphate</name>
        <dbReference type="ChEBI" id="CHEBI:128769"/>
    </ligand>
</feature>
<feature type="binding site" evidence="1">
    <location>
        <position position="229"/>
    </location>
    <ligand>
        <name>(2E)-4-hydroxy-3-methylbut-2-enyl diphosphate</name>
        <dbReference type="ChEBI" id="CHEBI:128753"/>
    </ligand>
</feature>
<feature type="binding site" evidence="1">
    <location>
        <position position="229"/>
    </location>
    <ligand>
        <name>dimethylallyl diphosphate</name>
        <dbReference type="ChEBI" id="CHEBI:57623"/>
    </ligand>
</feature>
<feature type="binding site" evidence="1">
    <location>
        <position position="229"/>
    </location>
    <ligand>
        <name>isopentenyl diphosphate</name>
        <dbReference type="ChEBI" id="CHEBI:128769"/>
    </ligand>
</feature>
<feature type="binding site" evidence="1">
    <location>
        <position position="230"/>
    </location>
    <ligand>
        <name>(2E)-4-hydroxy-3-methylbut-2-enyl diphosphate</name>
        <dbReference type="ChEBI" id="CHEBI:128753"/>
    </ligand>
</feature>
<feature type="binding site" evidence="1">
    <location>
        <position position="230"/>
    </location>
    <ligand>
        <name>dimethylallyl diphosphate</name>
        <dbReference type="ChEBI" id="CHEBI:57623"/>
    </ligand>
</feature>
<feature type="binding site" evidence="1">
    <location>
        <position position="230"/>
    </location>
    <ligand>
        <name>isopentenyl diphosphate</name>
        <dbReference type="ChEBI" id="CHEBI:128769"/>
    </ligand>
</feature>
<feature type="binding site" evidence="1">
    <location>
        <position position="273"/>
    </location>
    <ligand>
        <name>(2E)-4-hydroxy-3-methylbut-2-enyl diphosphate</name>
        <dbReference type="ChEBI" id="CHEBI:128753"/>
    </ligand>
</feature>
<feature type="binding site" evidence="1">
    <location>
        <position position="273"/>
    </location>
    <ligand>
        <name>dimethylallyl diphosphate</name>
        <dbReference type="ChEBI" id="CHEBI:57623"/>
    </ligand>
</feature>
<feature type="binding site" evidence="1">
    <location>
        <position position="273"/>
    </location>
    <ligand>
        <name>isopentenyl diphosphate</name>
        <dbReference type="ChEBI" id="CHEBI:128769"/>
    </ligand>
</feature>
<protein>
    <recommendedName>
        <fullName evidence="1">4-hydroxy-3-methylbut-2-enyl diphosphate reductase</fullName>
        <shortName evidence="1">HMBPP reductase</shortName>
        <ecNumber evidence="1">1.17.7.4</ecNumber>
    </recommendedName>
</protein>
<comment type="function">
    <text evidence="1">Catalyzes the conversion of 1-hydroxy-2-methyl-2-(E)-butenyl 4-diphosphate (HMBPP) into a mixture of isopentenyl diphosphate (IPP) and dimethylallyl diphosphate (DMAPP). Acts in the terminal step of the DOXP/MEP pathway for isoprenoid precursor biosynthesis.</text>
</comment>
<comment type="catalytic activity">
    <reaction evidence="1">
        <text>isopentenyl diphosphate + 2 oxidized [2Fe-2S]-[ferredoxin] + H2O = (2E)-4-hydroxy-3-methylbut-2-enyl diphosphate + 2 reduced [2Fe-2S]-[ferredoxin] + 2 H(+)</text>
        <dbReference type="Rhea" id="RHEA:24488"/>
        <dbReference type="Rhea" id="RHEA-COMP:10000"/>
        <dbReference type="Rhea" id="RHEA-COMP:10001"/>
        <dbReference type="ChEBI" id="CHEBI:15377"/>
        <dbReference type="ChEBI" id="CHEBI:15378"/>
        <dbReference type="ChEBI" id="CHEBI:33737"/>
        <dbReference type="ChEBI" id="CHEBI:33738"/>
        <dbReference type="ChEBI" id="CHEBI:128753"/>
        <dbReference type="ChEBI" id="CHEBI:128769"/>
        <dbReference type="EC" id="1.17.7.4"/>
    </reaction>
</comment>
<comment type="catalytic activity">
    <reaction evidence="1">
        <text>dimethylallyl diphosphate + 2 oxidized [2Fe-2S]-[ferredoxin] + H2O = (2E)-4-hydroxy-3-methylbut-2-enyl diphosphate + 2 reduced [2Fe-2S]-[ferredoxin] + 2 H(+)</text>
        <dbReference type="Rhea" id="RHEA:24825"/>
        <dbReference type="Rhea" id="RHEA-COMP:10000"/>
        <dbReference type="Rhea" id="RHEA-COMP:10001"/>
        <dbReference type="ChEBI" id="CHEBI:15377"/>
        <dbReference type="ChEBI" id="CHEBI:15378"/>
        <dbReference type="ChEBI" id="CHEBI:33737"/>
        <dbReference type="ChEBI" id="CHEBI:33738"/>
        <dbReference type="ChEBI" id="CHEBI:57623"/>
        <dbReference type="ChEBI" id="CHEBI:128753"/>
        <dbReference type="EC" id="1.17.7.4"/>
    </reaction>
</comment>
<comment type="cofactor">
    <cofactor evidence="1">
        <name>[4Fe-4S] cluster</name>
        <dbReference type="ChEBI" id="CHEBI:49883"/>
    </cofactor>
    <text evidence="1">Binds 1 [4Fe-4S] cluster per subunit.</text>
</comment>
<comment type="pathway">
    <text evidence="1">Isoprenoid biosynthesis; dimethylallyl diphosphate biosynthesis; dimethylallyl diphosphate from (2E)-4-hydroxy-3-methylbutenyl diphosphate: step 1/1.</text>
</comment>
<comment type="pathway">
    <text evidence="1">Isoprenoid biosynthesis; isopentenyl diphosphate biosynthesis via DXP pathway; isopentenyl diphosphate from 1-deoxy-D-xylulose 5-phosphate: step 6/6.</text>
</comment>
<comment type="similarity">
    <text evidence="1">Belongs to the IspH family.</text>
</comment>
<dbReference type="EC" id="1.17.7.4" evidence="1"/>
<dbReference type="EMBL" id="CP000661">
    <property type="protein sequence ID" value="ABP71468.1"/>
    <property type="molecule type" value="Genomic_DNA"/>
</dbReference>
<dbReference type="SMR" id="A4WVQ4"/>
<dbReference type="STRING" id="349102.Rsph17025_2580"/>
<dbReference type="KEGG" id="rsq:Rsph17025_2580"/>
<dbReference type="eggNOG" id="COG0761">
    <property type="taxonomic scope" value="Bacteria"/>
</dbReference>
<dbReference type="HOGENOM" id="CLU_027486_1_0_5"/>
<dbReference type="BioCyc" id="RSPH349102:G1G8M-2659-MONOMER"/>
<dbReference type="UniPathway" id="UPA00056">
    <property type="reaction ID" value="UER00097"/>
</dbReference>
<dbReference type="UniPathway" id="UPA00059">
    <property type="reaction ID" value="UER00105"/>
</dbReference>
<dbReference type="GO" id="GO:0051539">
    <property type="term" value="F:4 iron, 4 sulfur cluster binding"/>
    <property type="evidence" value="ECO:0007669"/>
    <property type="project" value="UniProtKB-UniRule"/>
</dbReference>
<dbReference type="GO" id="GO:0051745">
    <property type="term" value="F:4-hydroxy-3-methylbut-2-enyl diphosphate reductase activity"/>
    <property type="evidence" value="ECO:0007669"/>
    <property type="project" value="UniProtKB-UniRule"/>
</dbReference>
<dbReference type="GO" id="GO:0046872">
    <property type="term" value="F:metal ion binding"/>
    <property type="evidence" value="ECO:0007669"/>
    <property type="project" value="UniProtKB-KW"/>
</dbReference>
<dbReference type="GO" id="GO:0050992">
    <property type="term" value="P:dimethylallyl diphosphate biosynthetic process"/>
    <property type="evidence" value="ECO:0007669"/>
    <property type="project" value="UniProtKB-UniRule"/>
</dbReference>
<dbReference type="GO" id="GO:0019288">
    <property type="term" value="P:isopentenyl diphosphate biosynthetic process, methylerythritol 4-phosphate pathway"/>
    <property type="evidence" value="ECO:0007669"/>
    <property type="project" value="UniProtKB-UniRule"/>
</dbReference>
<dbReference type="GO" id="GO:0016114">
    <property type="term" value="P:terpenoid biosynthetic process"/>
    <property type="evidence" value="ECO:0007669"/>
    <property type="project" value="UniProtKB-UniRule"/>
</dbReference>
<dbReference type="CDD" id="cd13944">
    <property type="entry name" value="lytB_ispH"/>
    <property type="match status" value="1"/>
</dbReference>
<dbReference type="Gene3D" id="3.40.50.11270">
    <property type="match status" value="1"/>
</dbReference>
<dbReference type="Gene3D" id="3.40.1010.20">
    <property type="entry name" value="4-hydroxy-3-methylbut-2-enyl diphosphate reductase, catalytic domain"/>
    <property type="match status" value="2"/>
</dbReference>
<dbReference type="HAMAP" id="MF_00191">
    <property type="entry name" value="IspH"/>
    <property type="match status" value="1"/>
</dbReference>
<dbReference type="InterPro" id="IPR003451">
    <property type="entry name" value="LytB/IspH"/>
</dbReference>
<dbReference type="NCBIfam" id="TIGR00216">
    <property type="entry name" value="ispH_lytB"/>
    <property type="match status" value="1"/>
</dbReference>
<dbReference type="NCBIfam" id="NF002188">
    <property type="entry name" value="PRK01045.1-2"/>
    <property type="match status" value="1"/>
</dbReference>
<dbReference type="NCBIfam" id="NF002190">
    <property type="entry name" value="PRK01045.1-4"/>
    <property type="match status" value="1"/>
</dbReference>
<dbReference type="PANTHER" id="PTHR30426">
    <property type="entry name" value="4-HYDROXY-3-METHYLBUT-2-ENYL DIPHOSPHATE REDUCTASE"/>
    <property type="match status" value="1"/>
</dbReference>
<dbReference type="PANTHER" id="PTHR30426:SF0">
    <property type="entry name" value="4-HYDROXY-3-METHYLBUT-2-ENYL DIPHOSPHATE REDUCTASE"/>
    <property type="match status" value="1"/>
</dbReference>
<dbReference type="Pfam" id="PF02401">
    <property type="entry name" value="LYTB"/>
    <property type="match status" value="1"/>
</dbReference>
<keyword id="KW-0004">4Fe-4S</keyword>
<keyword id="KW-0408">Iron</keyword>
<keyword id="KW-0411">Iron-sulfur</keyword>
<keyword id="KW-0414">Isoprene biosynthesis</keyword>
<keyword id="KW-0479">Metal-binding</keyword>
<keyword id="KW-0560">Oxidoreductase</keyword>
<proteinExistence type="inferred from homology"/>
<evidence type="ECO:0000255" key="1">
    <source>
        <dbReference type="HAMAP-Rule" id="MF_00191"/>
    </source>
</evidence>